<keyword id="KW-0067">ATP-binding</keyword>
<keyword id="KW-0547">Nucleotide-binding</keyword>
<keyword id="KW-1185">Reference proteome</keyword>
<keyword id="KW-0808">Transferase</keyword>
<keyword id="KW-0833">Ubl conjugation pathway</keyword>
<protein>
    <recommendedName>
        <fullName>NEDD8-conjugating enzyme UBE2F</fullName>
        <ecNumber evidence="2">2.3.2.34</ecNumber>
    </recommendedName>
    <alternativeName>
        <fullName>NEDD8 carrier protein UBE2F</fullName>
    </alternativeName>
    <alternativeName>
        <fullName>NEDD8 protein ligase UBE2F</fullName>
    </alternativeName>
    <alternativeName>
        <fullName>NEDD8-conjugating enzyme 2</fullName>
    </alternativeName>
    <alternativeName>
        <fullName>RING-type E3 NEDD8 transferase UBE2F</fullName>
    </alternativeName>
    <alternativeName>
        <fullName>Ubiquitin-conjugating enzyme E2 F</fullName>
    </alternativeName>
</protein>
<comment type="function">
    <text evidence="2">Accepts the ubiquitin-like protein NEDD8 from the UBA3-NAE1 E1 complex and catalyzes its covalent attachment to other proteins. Together with the E3 ubiquitin ligase rnf7/rbx2, specifically neddylates cullin-5 (cul5). Does not neddylate cul1, cul2, cul3, cul4a or cul4b.</text>
</comment>
<comment type="catalytic activity">
    <reaction evidence="2">
        <text>[E1 NEDD8-activating enzyme]-S-[NEDD8 protein]-yl-L-cysteine + [E2 NEDD8-conjugating enzyme]-L-cysteine = [E1 NEDD8-activating enzyme]-L-cysteine + [E2 NEDD8-conjugating enzyme]-S-[NEDD8-protein]-yl-L-cysteine.</text>
        <dbReference type="EC" id="2.3.2.34"/>
    </reaction>
</comment>
<comment type="pathway">
    <text evidence="2">Protein modification; protein neddylation.</text>
</comment>
<comment type="similarity">
    <text evidence="3">Belongs to the ubiquitin-conjugating enzyme family. UBE2F subfamily.</text>
</comment>
<comment type="sequence caution" evidence="5">
    <conflict type="erroneous gene model prediction">
        <sequence resource="EMBL-CDS" id="CAX12886"/>
    </conflict>
</comment>
<proteinExistence type="evidence at transcript level"/>
<feature type="chain" id="PRO_0000263080" description="NEDD8-conjugating enzyme UBE2F">
    <location>
        <begin position="1"/>
        <end position="185"/>
    </location>
</feature>
<feature type="domain" description="UBC core" evidence="3">
    <location>
        <begin position="32"/>
        <end position="185"/>
    </location>
</feature>
<feature type="region of interest" description="Interaction with uba3" evidence="1">
    <location>
        <begin position="1"/>
        <end position="29"/>
    </location>
</feature>
<feature type="active site" description="Glycyl thioester intermediate" evidence="3 4">
    <location>
        <position position="116"/>
    </location>
</feature>
<name>UBE2F_DANRE</name>
<dbReference type="EC" id="2.3.2.34" evidence="2"/>
<dbReference type="EMBL" id="AL929396">
    <property type="protein sequence ID" value="CAX12885.1"/>
    <property type="molecule type" value="Genomic_DNA"/>
</dbReference>
<dbReference type="EMBL" id="AL929396">
    <property type="protein sequence ID" value="CAX12886.1"/>
    <property type="status" value="ALT_SEQ"/>
    <property type="molecule type" value="Genomic_DNA"/>
</dbReference>
<dbReference type="EMBL" id="BC066702">
    <property type="protein sequence ID" value="AAH66702.1"/>
    <property type="molecule type" value="mRNA"/>
</dbReference>
<dbReference type="RefSeq" id="NP_001410727.1">
    <property type="nucleotide sequence ID" value="NM_001423798.1"/>
</dbReference>
<dbReference type="RefSeq" id="NP_001410728.1">
    <property type="nucleotide sequence ID" value="NM_001423799.1"/>
</dbReference>
<dbReference type="RefSeq" id="NP_998479.1">
    <property type="nucleotide sequence ID" value="NM_213314.2"/>
</dbReference>
<dbReference type="RefSeq" id="XP_005160353.1">
    <property type="nucleotide sequence ID" value="XM_005160296.3"/>
</dbReference>
<dbReference type="RefSeq" id="XP_009303965.1">
    <property type="nucleotide sequence ID" value="XM_009305690.2"/>
</dbReference>
<dbReference type="SMR" id="Q6NY82"/>
<dbReference type="FunCoup" id="Q6NY82">
    <property type="interactions" value="1765"/>
</dbReference>
<dbReference type="STRING" id="7955.ENSDARP00000094476"/>
<dbReference type="PaxDb" id="7955-ENSDARP00000094476"/>
<dbReference type="Ensembl" id="ENSDART00000103701">
    <property type="protein sequence ID" value="ENSDARP00000094476"/>
    <property type="gene ID" value="ENSDARG00000025754"/>
</dbReference>
<dbReference type="Ensembl" id="ENSDART00000144641">
    <property type="protein sequence ID" value="ENSDARP00000120196"/>
    <property type="gene ID" value="ENSDARG00000025754"/>
</dbReference>
<dbReference type="GeneID" id="406606"/>
<dbReference type="KEGG" id="dre:406606"/>
<dbReference type="AGR" id="ZFIN:ZDB-GENE-040426-2557"/>
<dbReference type="CTD" id="140739"/>
<dbReference type="ZFIN" id="ZDB-GENE-040426-2557">
    <property type="gene designation" value="ube2f"/>
</dbReference>
<dbReference type="eggNOG" id="KOG0420">
    <property type="taxonomic scope" value="Eukaryota"/>
</dbReference>
<dbReference type="HOGENOM" id="CLU_030988_6_4_1"/>
<dbReference type="InParanoid" id="Q6NY82"/>
<dbReference type="OMA" id="VMQYAKR"/>
<dbReference type="OrthoDB" id="10249039at2759"/>
<dbReference type="PhylomeDB" id="Q6NY82"/>
<dbReference type="TreeFam" id="TF101125"/>
<dbReference type="Reactome" id="R-DRE-8951664">
    <property type="pathway name" value="Neddylation"/>
</dbReference>
<dbReference type="Reactome" id="R-DRE-983168">
    <property type="pathway name" value="Antigen processing: Ubiquitination &amp; Proteasome degradation"/>
</dbReference>
<dbReference type="UniPathway" id="UPA00885"/>
<dbReference type="PRO" id="PR:Q6NY82"/>
<dbReference type="Proteomes" id="UP000000437">
    <property type="component" value="Chromosome 1"/>
</dbReference>
<dbReference type="Bgee" id="ENSDARG00000025754">
    <property type="expression patterns" value="Expressed in testis and 21 other cell types or tissues"/>
</dbReference>
<dbReference type="ExpressionAtlas" id="Q6NY82">
    <property type="expression patterns" value="baseline"/>
</dbReference>
<dbReference type="GO" id="GO:0005829">
    <property type="term" value="C:cytosol"/>
    <property type="evidence" value="ECO:0000318"/>
    <property type="project" value="GO_Central"/>
</dbReference>
<dbReference type="GO" id="GO:0005634">
    <property type="term" value="C:nucleus"/>
    <property type="evidence" value="ECO:0000318"/>
    <property type="project" value="GO_Central"/>
</dbReference>
<dbReference type="GO" id="GO:0005524">
    <property type="term" value="F:ATP binding"/>
    <property type="evidence" value="ECO:0007669"/>
    <property type="project" value="UniProtKB-KW"/>
</dbReference>
<dbReference type="GO" id="GO:0061654">
    <property type="term" value="F:NEDD8 conjugating enzyme activity"/>
    <property type="evidence" value="ECO:0000250"/>
    <property type="project" value="UniProtKB"/>
</dbReference>
<dbReference type="GO" id="GO:0061663">
    <property type="term" value="F:NEDD8 ligase activity"/>
    <property type="evidence" value="ECO:0007669"/>
    <property type="project" value="UniProtKB-EC"/>
</dbReference>
<dbReference type="GO" id="GO:0019788">
    <property type="term" value="F:NEDD8 transferase activity"/>
    <property type="evidence" value="ECO:0000318"/>
    <property type="project" value="GO_Central"/>
</dbReference>
<dbReference type="GO" id="GO:0045116">
    <property type="term" value="P:protein neddylation"/>
    <property type="evidence" value="ECO:0000250"/>
    <property type="project" value="UniProtKB"/>
</dbReference>
<dbReference type="CDD" id="cd23794">
    <property type="entry name" value="UBCc_UBE2F_UBE2M"/>
    <property type="match status" value="1"/>
</dbReference>
<dbReference type="FunFam" id="3.10.110.10:FF:000033">
    <property type="entry name" value="NEDD8-conjugating enzyme UBE2F"/>
    <property type="match status" value="1"/>
</dbReference>
<dbReference type="Gene3D" id="3.10.110.10">
    <property type="entry name" value="Ubiquitin Conjugating Enzyme"/>
    <property type="match status" value="1"/>
</dbReference>
<dbReference type="InterPro" id="IPR050113">
    <property type="entry name" value="Ub_conjugating_enzyme"/>
</dbReference>
<dbReference type="InterPro" id="IPR000608">
    <property type="entry name" value="UBQ-conjugat_E2_core"/>
</dbReference>
<dbReference type="InterPro" id="IPR023313">
    <property type="entry name" value="UBQ-conjugating_AS"/>
</dbReference>
<dbReference type="InterPro" id="IPR016135">
    <property type="entry name" value="UBQ-conjugating_enzyme/RWD"/>
</dbReference>
<dbReference type="PANTHER" id="PTHR24067">
    <property type="entry name" value="UBIQUITIN-CONJUGATING ENZYME E2"/>
    <property type="match status" value="1"/>
</dbReference>
<dbReference type="Pfam" id="PF00179">
    <property type="entry name" value="UQ_con"/>
    <property type="match status" value="1"/>
</dbReference>
<dbReference type="SMART" id="SM00212">
    <property type="entry name" value="UBCc"/>
    <property type="match status" value="1"/>
</dbReference>
<dbReference type="SUPFAM" id="SSF54495">
    <property type="entry name" value="UBC-like"/>
    <property type="match status" value="1"/>
</dbReference>
<dbReference type="PROSITE" id="PS00183">
    <property type="entry name" value="UBC_1"/>
    <property type="match status" value="1"/>
</dbReference>
<dbReference type="PROSITE" id="PS50127">
    <property type="entry name" value="UBC_2"/>
    <property type="match status" value="1"/>
</dbReference>
<accession>Q6NY82</accession>
<accession>B7ZD57</accession>
<accession>B7ZD58</accession>
<evidence type="ECO:0000250" key="1"/>
<evidence type="ECO:0000250" key="2">
    <source>
        <dbReference type="UniProtKB" id="Q969M7"/>
    </source>
</evidence>
<evidence type="ECO:0000255" key="3">
    <source>
        <dbReference type="PROSITE-ProRule" id="PRU00388"/>
    </source>
</evidence>
<evidence type="ECO:0000255" key="4">
    <source>
        <dbReference type="PROSITE-ProRule" id="PRU10133"/>
    </source>
</evidence>
<evidence type="ECO:0000305" key="5"/>
<reference key="1">
    <citation type="journal article" date="2013" name="Nature">
        <title>The zebrafish reference genome sequence and its relationship to the human genome.</title>
        <authorList>
            <person name="Howe K."/>
            <person name="Clark M.D."/>
            <person name="Torroja C.F."/>
            <person name="Torrance J."/>
            <person name="Berthelot C."/>
            <person name="Muffato M."/>
            <person name="Collins J.E."/>
            <person name="Humphray S."/>
            <person name="McLaren K."/>
            <person name="Matthews L."/>
            <person name="McLaren S."/>
            <person name="Sealy I."/>
            <person name="Caccamo M."/>
            <person name="Churcher C."/>
            <person name="Scott C."/>
            <person name="Barrett J.C."/>
            <person name="Koch R."/>
            <person name="Rauch G.J."/>
            <person name="White S."/>
            <person name="Chow W."/>
            <person name="Kilian B."/>
            <person name="Quintais L.T."/>
            <person name="Guerra-Assuncao J.A."/>
            <person name="Zhou Y."/>
            <person name="Gu Y."/>
            <person name="Yen J."/>
            <person name="Vogel J.H."/>
            <person name="Eyre T."/>
            <person name="Redmond S."/>
            <person name="Banerjee R."/>
            <person name="Chi J."/>
            <person name="Fu B."/>
            <person name="Langley E."/>
            <person name="Maguire S.F."/>
            <person name="Laird G.K."/>
            <person name="Lloyd D."/>
            <person name="Kenyon E."/>
            <person name="Donaldson S."/>
            <person name="Sehra H."/>
            <person name="Almeida-King J."/>
            <person name="Loveland J."/>
            <person name="Trevanion S."/>
            <person name="Jones M."/>
            <person name="Quail M."/>
            <person name="Willey D."/>
            <person name="Hunt A."/>
            <person name="Burton J."/>
            <person name="Sims S."/>
            <person name="McLay K."/>
            <person name="Plumb B."/>
            <person name="Davis J."/>
            <person name="Clee C."/>
            <person name="Oliver K."/>
            <person name="Clark R."/>
            <person name="Riddle C."/>
            <person name="Elliot D."/>
            <person name="Threadgold G."/>
            <person name="Harden G."/>
            <person name="Ware D."/>
            <person name="Begum S."/>
            <person name="Mortimore B."/>
            <person name="Kerry G."/>
            <person name="Heath P."/>
            <person name="Phillimore B."/>
            <person name="Tracey A."/>
            <person name="Corby N."/>
            <person name="Dunn M."/>
            <person name="Johnson C."/>
            <person name="Wood J."/>
            <person name="Clark S."/>
            <person name="Pelan S."/>
            <person name="Griffiths G."/>
            <person name="Smith M."/>
            <person name="Glithero R."/>
            <person name="Howden P."/>
            <person name="Barker N."/>
            <person name="Lloyd C."/>
            <person name="Stevens C."/>
            <person name="Harley J."/>
            <person name="Holt K."/>
            <person name="Panagiotidis G."/>
            <person name="Lovell J."/>
            <person name="Beasley H."/>
            <person name="Henderson C."/>
            <person name="Gordon D."/>
            <person name="Auger K."/>
            <person name="Wright D."/>
            <person name="Collins J."/>
            <person name="Raisen C."/>
            <person name="Dyer L."/>
            <person name="Leung K."/>
            <person name="Robertson L."/>
            <person name="Ambridge K."/>
            <person name="Leongamornlert D."/>
            <person name="McGuire S."/>
            <person name="Gilderthorp R."/>
            <person name="Griffiths C."/>
            <person name="Manthravadi D."/>
            <person name="Nichol S."/>
            <person name="Barker G."/>
            <person name="Whitehead S."/>
            <person name="Kay M."/>
            <person name="Brown J."/>
            <person name="Murnane C."/>
            <person name="Gray E."/>
            <person name="Humphries M."/>
            <person name="Sycamore N."/>
            <person name="Barker D."/>
            <person name="Saunders D."/>
            <person name="Wallis J."/>
            <person name="Babbage A."/>
            <person name="Hammond S."/>
            <person name="Mashreghi-Mohammadi M."/>
            <person name="Barr L."/>
            <person name="Martin S."/>
            <person name="Wray P."/>
            <person name="Ellington A."/>
            <person name="Matthews N."/>
            <person name="Ellwood M."/>
            <person name="Woodmansey R."/>
            <person name="Clark G."/>
            <person name="Cooper J."/>
            <person name="Tromans A."/>
            <person name="Grafham D."/>
            <person name="Skuce C."/>
            <person name="Pandian R."/>
            <person name="Andrews R."/>
            <person name="Harrison E."/>
            <person name="Kimberley A."/>
            <person name="Garnett J."/>
            <person name="Fosker N."/>
            <person name="Hall R."/>
            <person name="Garner P."/>
            <person name="Kelly D."/>
            <person name="Bird C."/>
            <person name="Palmer S."/>
            <person name="Gehring I."/>
            <person name="Berger A."/>
            <person name="Dooley C.M."/>
            <person name="Ersan-Urun Z."/>
            <person name="Eser C."/>
            <person name="Geiger H."/>
            <person name="Geisler M."/>
            <person name="Karotki L."/>
            <person name="Kirn A."/>
            <person name="Konantz J."/>
            <person name="Konantz M."/>
            <person name="Oberlander M."/>
            <person name="Rudolph-Geiger S."/>
            <person name="Teucke M."/>
            <person name="Lanz C."/>
            <person name="Raddatz G."/>
            <person name="Osoegawa K."/>
            <person name="Zhu B."/>
            <person name="Rapp A."/>
            <person name="Widaa S."/>
            <person name="Langford C."/>
            <person name="Yang F."/>
            <person name="Schuster S.C."/>
            <person name="Carter N.P."/>
            <person name="Harrow J."/>
            <person name="Ning Z."/>
            <person name="Herrero J."/>
            <person name="Searle S.M."/>
            <person name="Enright A."/>
            <person name="Geisler R."/>
            <person name="Plasterk R.H."/>
            <person name="Lee C."/>
            <person name="Westerfield M."/>
            <person name="de Jong P.J."/>
            <person name="Zon L.I."/>
            <person name="Postlethwait J.H."/>
            <person name="Nusslein-Volhard C."/>
            <person name="Hubbard T.J."/>
            <person name="Roest Crollius H."/>
            <person name="Rogers J."/>
            <person name="Stemple D.L."/>
        </authorList>
    </citation>
    <scope>NUCLEOTIDE SEQUENCE [LARGE SCALE GENOMIC DNA]</scope>
    <source>
        <strain>Tuebingen</strain>
    </source>
</reference>
<reference key="2">
    <citation type="submission" date="2004-03" db="EMBL/GenBank/DDBJ databases">
        <authorList>
            <consortium name="NIH - Zebrafish Gene Collection (ZGC) project"/>
        </authorList>
    </citation>
    <scope>NUCLEOTIDE SEQUENCE [LARGE SCALE MRNA]</scope>
    <source>
        <tissue>Kidney</tissue>
    </source>
</reference>
<gene>
    <name type="primary">ube2f</name>
    <name type="ORF">ch211-93g23.1</name>
    <name type="ORF">zgc:77005</name>
</gene>
<organism>
    <name type="scientific">Danio rerio</name>
    <name type="common">Zebrafish</name>
    <name type="synonym">Brachydanio rerio</name>
    <dbReference type="NCBI Taxonomy" id="7955"/>
    <lineage>
        <taxon>Eukaryota</taxon>
        <taxon>Metazoa</taxon>
        <taxon>Chordata</taxon>
        <taxon>Craniata</taxon>
        <taxon>Vertebrata</taxon>
        <taxon>Euteleostomi</taxon>
        <taxon>Actinopterygii</taxon>
        <taxon>Neopterygii</taxon>
        <taxon>Teleostei</taxon>
        <taxon>Ostariophysi</taxon>
        <taxon>Cypriniformes</taxon>
        <taxon>Danionidae</taxon>
        <taxon>Danioninae</taxon>
        <taxon>Danio</taxon>
    </lineage>
</organism>
<sequence length="185" mass="21019">MLTLASKLKREEGVRAGRTPAGSNDAAHRVSIRDRLLIKEVAELEANLPSTCKVTFPDENKLCHFQLAISPDEGYYLGGKFQFEIEVPEAYNMVPPKVKCLTRIWHPNIAETGEICLSLLREHSIDGTGWAPTRTLKDVVWGLNSLFTDLLNFDDPLNIDAAEHHLRDKEDFRNKVQDFIKNYAR</sequence>